<comment type="function">
    <text evidence="1">Specifically methylates the guanine in position 2445 (m2G2445) and the guanine in position 2069 (m7G2069) of 23S rRNA.</text>
</comment>
<comment type="catalytic activity">
    <reaction evidence="1">
        <text>guanosine(2445) in 23S rRNA + S-adenosyl-L-methionine = N(2)-methylguanosine(2445) in 23S rRNA + S-adenosyl-L-homocysteine + H(+)</text>
        <dbReference type="Rhea" id="RHEA:42740"/>
        <dbReference type="Rhea" id="RHEA-COMP:10215"/>
        <dbReference type="Rhea" id="RHEA-COMP:10216"/>
        <dbReference type="ChEBI" id="CHEBI:15378"/>
        <dbReference type="ChEBI" id="CHEBI:57856"/>
        <dbReference type="ChEBI" id="CHEBI:59789"/>
        <dbReference type="ChEBI" id="CHEBI:74269"/>
        <dbReference type="ChEBI" id="CHEBI:74481"/>
        <dbReference type="EC" id="2.1.1.173"/>
    </reaction>
</comment>
<comment type="catalytic activity">
    <reaction evidence="1">
        <text>guanosine(2069) in 23S rRNA + S-adenosyl-L-methionine = N(2)-methylguanosine(2069) in 23S rRNA + S-adenosyl-L-homocysteine + H(+)</text>
        <dbReference type="Rhea" id="RHEA:43772"/>
        <dbReference type="Rhea" id="RHEA-COMP:10688"/>
        <dbReference type="Rhea" id="RHEA-COMP:10689"/>
        <dbReference type="ChEBI" id="CHEBI:15378"/>
        <dbReference type="ChEBI" id="CHEBI:57856"/>
        <dbReference type="ChEBI" id="CHEBI:59789"/>
        <dbReference type="ChEBI" id="CHEBI:74269"/>
        <dbReference type="ChEBI" id="CHEBI:74481"/>
        <dbReference type="EC" id="2.1.1.264"/>
    </reaction>
</comment>
<comment type="subcellular location">
    <subcellularLocation>
        <location evidence="1">Cytoplasm</location>
    </subcellularLocation>
</comment>
<comment type="similarity">
    <text evidence="1">Belongs to the methyltransferase superfamily. RlmKL family.</text>
</comment>
<evidence type="ECO:0000255" key="1">
    <source>
        <dbReference type="HAMAP-Rule" id="MF_01858"/>
    </source>
</evidence>
<proteinExistence type="inferred from homology"/>
<protein>
    <recommendedName>
        <fullName evidence="1">Ribosomal RNA large subunit methyltransferase K/L</fullName>
    </recommendedName>
    <domain>
        <recommendedName>
            <fullName evidence="1">23S rRNA m2G2445 methyltransferase</fullName>
            <ecNumber evidence="1">2.1.1.173</ecNumber>
        </recommendedName>
        <alternativeName>
            <fullName evidence="1">rRNA (guanine-N(2)-)-methyltransferase RlmL</fullName>
        </alternativeName>
    </domain>
    <domain>
        <recommendedName>
            <fullName evidence="1">23S rRNA m7G2069 methyltransferase</fullName>
            <ecNumber evidence="1">2.1.1.264</ecNumber>
        </recommendedName>
        <alternativeName>
            <fullName evidence="1">rRNA (guanine-N(7)-)-methyltransferase RlmK</fullName>
        </alternativeName>
    </domain>
</protein>
<name>RLMKL_PSYCK</name>
<reference key="1">
    <citation type="submission" date="2006-03" db="EMBL/GenBank/DDBJ databases">
        <title>Complete sequence of chromosome of Psychrobacter cryohalolentis K5.</title>
        <authorList>
            <consortium name="US DOE Joint Genome Institute"/>
            <person name="Copeland A."/>
            <person name="Lucas S."/>
            <person name="Lapidus A."/>
            <person name="Barry K."/>
            <person name="Detter J.C."/>
            <person name="Glavina T."/>
            <person name="Hammon N."/>
            <person name="Israni S."/>
            <person name="Dalin E."/>
            <person name="Tice H."/>
            <person name="Pitluck S."/>
            <person name="Brettin T."/>
            <person name="Bruce D."/>
            <person name="Han C."/>
            <person name="Tapia R."/>
            <person name="Sims D.R."/>
            <person name="Gilna P."/>
            <person name="Schmutz J."/>
            <person name="Larimer F."/>
            <person name="Land M."/>
            <person name="Hauser L."/>
            <person name="Kyrpides N."/>
            <person name="Kim E."/>
            <person name="Richardson P."/>
        </authorList>
    </citation>
    <scope>NUCLEOTIDE SEQUENCE [LARGE SCALE GENOMIC DNA]</scope>
    <source>
        <strain>ATCC BAA-1226 / DSM 17306 / VKM B-2378 / K5</strain>
    </source>
</reference>
<dbReference type="EC" id="2.1.1.173" evidence="1"/>
<dbReference type="EC" id="2.1.1.264" evidence="1"/>
<dbReference type="EMBL" id="CP000323">
    <property type="protein sequence ID" value="ABE74555.1"/>
    <property type="molecule type" value="Genomic_DNA"/>
</dbReference>
<dbReference type="RefSeq" id="WP_011513119.1">
    <property type="nucleotide sequence ID" value="NC_007969.1"/>
</dbReference>
<dbReference type="SMR" id="Q1QCP8"/>
<dbReference type="STRING" id="335284.Pcryo_0772"/>
<dbReference type="KEGG" id="pcr:Pcryo_0772"/>
<dbReference type="eggNOG" id="COG0116">
    <property type="taxonomic scope" value="Bacteria"/>
</dbReference>
<dbReference type="eggNOG" id="COG1092">
    <property type="taxonomic scope" value="Bacteria"/>
</dbReference>
<dbReference type="HOGENOM" id="CLU_014042_2_0_6"/>
<dbReference type="Proteomes" id="UP000002425">
    <property type="component" value="Chromosome"/>
</dbReference>
<dbReference type="GO" id="GO:0005737">
    <property type="term" value="C:cytoplasm"/>
    <property type="evidence" value="ECO:0007669"/>
    <property type="project" value="UniProtKB-SubCell"/>
</dbReference>
<dbReference type="GO" id="GO:0052915">
    <property type="term" value="F:23S rRNA (guanine(2445)-N(2))-methyltransferase activity"/>
    <property type="evidence" value="ECO:0007669"/>
    <property type="project" value="UniProtKB-UniRule"/>
</dbReference>
<dbReference type="GO" id="GO:0003723">
    <property type="term" value="F:RNA binding"/>
    <property type="evidence" value="ECO:0007669"/>
    <property type="project" value="UniProtKB-KW"/>
</dbReference>
<dbReference type="GO" id="GO:0070043">
    <property type="term" value="F:rRNA (guanine-N7-)-methyltransferase activity"/>
    <property type="evidence" value="ECO:0007669"/>
    <property type="project" value="UniProtKB-UniRule"/>
</dbReference>
<dbReference type="CDD" id="cd02440">
    <property type="entry name" value="AdoMet_MTases"/>
    <property type="match status" value="1"/>
</dbReference>
<dbReference type="CDD" id="cd11715">
    <property type="entry name" value="THUMP_AdoMetMT"/>
    <property type="match status" value="1"/>
</dbReference>
<dbReference type="Gene3D" id="3.30.2130.30">
    <property type="match status" value="1"/>
</dbReference>
<dbReference type="Gene3D" id="3.30.750.80">
    <property type="entry name" value="RNA methyltransferase domain (HRMD) like"/>
    <property type="match status" value="1"/>
</dbReference>
<dbReference type="Gene3D" id="3.40.50.150">
    <property type="entry name" value="Vaccinia Virus protein VP39"/>
    <property type="match status" value="2"/>
</dbReference>
<dbReference type="HAMAP" id="MF_01858">
    <property type="entry name" value="23SrRNA_methyltr_KL"/>
    <property type="match status" value="1"/>
</dbReference>
<dbReference type="InterPro" id="IPR017244">
    <property type="entry name" value="23SrRNA_methyltr_KL"/>
</dbReference>
<dbReference type="InterPro" id="IPR002052">
    <property type="entry name" value="DNA_methylase_N6_adenine_CS"/>
</dbReference>
<dbReference type="InterPro" id="IPR000241">
    <property type="entry name" value="RlmKL-like_Mtase"/>
</dbReference>
<dbReference type="InterPro" id="IPR053943">
    <property type="entry name" value="RlmKL-like_Mtase_CS"/>
</dbReference>
<dbReference type="InterPro" id="IPR054170">
    <property type="entry name" value="RlmL_1st"/>
</dbReference>
<dbReference type="InterPro" id="IPR019614">
    <property type="entry name" value="SAM-dep_methyl-trfase"/>
</dbReference>
<dbReference type="InterPro" id="IPR029063">
    <property type="entry name" value="SAM-dependent_MTases_sf"/>
</dbReference>
<dbReference type="InterPro" id="IPR004114">
    <property type="entry name" value="THUMP_dom"/>
</dbReference>
<dbReference type="NCBIfam" id="NF008748">
    <property type="entry name" value="PRK11783.1"/>
    <property type="match status" value="1"/>
</dbReference>
<dbReference type="PANTHER" id="PTHR47313">
    <property type="entry name" value="RIBOSOMAL RNA LARGE SUBUNIT METHYLTRANSFERASE K/L"/>
    <property type="match status" value="1"/>
</dbReference>
<dbReference type="PANTHER" id="PTHR47313:SF1">
    <property type="entry name" value="RIBOSOMAL RNA LARGE SUBUNIT METHYLTRANSFERASE K_L"/>
    <property type="match status" value="1"/>
</dbReference>
<dbReference type="Pfam" id="PF10672">
    <property type="entry name" value="Methyltrans_SAM"/>
    <property type="match status" value="1"/>
</dbReference>
<dbReference type="Pfam" id="PF22020">
    <property type="entry name" value="RlmL_1st"/>
    <property type="match status" value="1"/>
</dbReference>
<dbReference type="Pfam" id="PF02926">
    <property type="entry name" value="THUMP"/>
    <property type="match status" value="1"/>
</dbReference>
<dbReference type="Pfam" id="PF01170">
    <property type="entry name" value="UPF0020"/>
    <property type="match status" value="1"/>
</dbReference>
<dbReference type="PIRSF" id="PIRSF037618">
    <property type="entry name" value="RNA_Mtase_bacteria_prd"/>
    <property type="match status" value="1"/>
</dbReference>
<dbReference type="SMART" id="SM00981">
    <property type="entry name" value="THUMP"/>
    <property type="match status" value="1"/>
</dbReference>
<dbReference type="SUPFAM" id="SSF53335">
    <property type="entry name" value="S-adenosyl-L-methionine-dependent methyltransferases"/>
    <property type="match status" value="2"/>
</dbReference>
<dbReference type="PROSITE" id="PS51165">
    <property type="entry name" value="THUMP"/>
    <property type="match status" value="1"/>
</dbReference>
<dbReference type="PROSITE" id="PS01261">
    <property type="entry name" value="UPF0020"/>
    <property type="match status" value="1"/>
</dbReference>
<keyword id="KW-0963">Cytoplasm</keyword>
<keyword id="KW-0489">Methyltransferase</keyword>
<keyword id="KW-0694">RNA-binding</keyword>
<keyword id="KW-0698">rRNA processing</keyword>
<keyword id="KW-0949">S-adenosyl-L-methionine</keyword>
<keyword id="KW-0808">Transferase</keyword>
<feature type="chain" id="PRO_0000366800" description="Ribosomal RNA large subunit methyltransferase K/L">
    <location>
        <begin position="1"/>
        <end position="776"/>
    </location>
</feature>
<feature type="domain" description="THUMP" evidence="1">
    <location>
        <begin position="68"/>
        <end position="183"/>
    </location>
</feature>
<organism>
    <name type="scientific">Psychrobacter cryohalolentis (strain ATCC BAA-1226 / DSM 17306 / VKM B-2378 / K5)</name>
    <dbReference type="NCBI Taxonomy" id="335284"/>
    <lineage>
        <taxon>Bacteria</taxon>
        <taxon>Pseudomonadati</taxon>
        <taxon>Pseudomonadota</taxon>
        <taxon>Gammaproteobacteria</taxon>
        <taxon>Moraxellales</taxon>
        <taxon>Moraxellaceae</taxon>
        <taxon>Psychrobacter</taxon>
    </lineage>
</organism>
<accession>Q1QCP8</accession>
<gene>
    <name evidence="1" type="primary">rlmL</name>
    <name type="ordered locus">Pcryo_0772</name>
</gene>
<sequence length="776" mass="87393">MTETTALASSTASSQPSSQASSQVLSLDLIITCADGLEAPLQTELTSFGIASEIKSTGRLAVTGTLRDLYKICLWSRVASRVLMLIKRKNINAEYDVAEQLYGLAKSVNWTEQFSLEQTFAIRLSVDKRVAVSQQFAMLRIKDAIADTFNEVYESRPNVDSKNPDFSVFATVNDKQAELYLDLSGTSLHRRGYRVAMTEAPLKENLAAALLYSAGWHKKNEAGDTPFYNALIDPMCGSGTFIIEALLMHCDYAVGIDKAANQFGFYEWQHHDAALWQEMIDDAQTRFRAALEIANEQPDTLPLIFGFDADNGAIIATEKNLIAAGLQDLLPLLDIETRALDQLSTLLKPLVADGRLSNPLIITNPPYGERLGDEEMIKPLYQSIGLILQDSFAGSGIDPMLGILASHVEQVDILPIREPKTLRCHNGAITVYFRYGTLIAGQTGNLVSRFEKREIEVEDGQDFINRLQKNLTRLKKLAKKDNVSNIRVYNADLPDFKVAIDLYGDYAHVQEYAPPKTIPPETAKKRFNLALMGIREVFGINREQIFIKTRARQSGNDQYSKQGNTEKRGKFYIAREDGAYLYVNFTDYLDTGLFIDHRNMRARIKDNSRNKSVLNLFAYTCTASVHAALAGAKKVTSVDLSQNYLDWGKQNFALNGLNVSSNKYQFVAADIFEWIKDNTEQFDIIFIDPPTFSNSKKFQGTFDVQRDHAALINRAMNRLTADGILYFSNNFTRFELDEQLTERYDIIDITQKTIGFDFDIKKPIHQSFEIRHRQSL</sequence>